<protein>
    <recommendedName>
        <fullName evidence="1">Ribonuclease P protein component 3</fullName>
        <shortName evidence="1">RNase P component 3</shortName>
        <ecNumber evidence="1">3.1.26.5</ecNumber>
    </recommendedName>
    <alternativeName>
        <fullName evidence="1">Rpp30</fullName>
    </alternativeName>
</protein>
<reference key="1">
    <citation type="journal article" date="2003" name="Mol. Microbiol.">
        <title>An integrated analysis of the genome of the hyperthermophilic archaeon Pyrococcus abyssi.</title>
        <authorList>
            <person name="Cohen G.N."/>
            <person name="Barbe V."/>
            <person name="Flament D."/>
            <person name="Galperin M."/>
            <person name="Heilig R."/>
            <person name="Lecompte O."/>
            <person name="Poch O."/>
            <person name="Prieur D."/>
            <person name="Querellou J."/>
            <person name="Ripp R."/>
            <person name="Thierry J.-C."/>
            <person name="Van der Oost J."/>
            <person name="Weissenbach J."/>
            <person name="Zivanovic Y."/>
            <person name="Forterre P."/>
        </authorList>
    </citation>
    <scope>NUCLEOTIDE SEQUENCE [LARGE SCALE GENOMIC DNA]</scope>
    <source>
        <strain>GE5 / Orsay</strain>
    </source>
</reference>
<reference key="2">
    <citation type="journal article" date="2012" name="Curr. Microbiol.">
        <title>Re-annotation of two hyperthermophilic archaea Pyrococcus abyssi GE5 and Pyrococcus furiosus DSM 3638.</title>
        <authorList>
            <person name="Gao J."/>
            <person name="Wang J."/>
        </authorList>
    </citation>
    <scope>GENOME REANNOTATION</scope>
    <source>
        <strain>GE5 / Orsay</strain>
    </source>
</reference>
<gene>
    <name evidence="1" type="primary">rnp3</name>
    <name type="ordered locus">PYRAB17310</name>
    <name type="ORF">PAB1136</name>
</gene>
<keyword id="KW-0963">Cytoplasm</keyword>
<keyword id="KW-0255">Endonuclease</keyword>
<keyword id="KW-0378">Hydrolase</keyword>
<keyword id="KW-0540">Nuclease</keyword>
<keyword id="KW-0819">tRNA processing</keyword>
<accession>Q9UXX7</accession>
<accession>G8ZK97</accession>
<dbReference type="EC" id="3.1.26.5" evidence="1"/>
<dbReference type="EMBL" id="AJ248288">
    <property type="protein sequence ID" value="CAB50636.1"/>
    <property type="molecule type" value="Genomic_DNA"/>
</dbReference>
<dbReference type="EMBL" id="HE613800">
    <property type="protein sequence ID" value="CCE71204.1"/>
    <property type="molecule type" value="Genomic_DNA"/>
</dbReference>
<dbReference type="PIR" id="F75024">
    <property type="entry name" value="F75024"/>
</dbReference>
<dbReference type="RefSeq" id="WP_010868850.1">
    <property type="nucleotide sequence ID" value="NC_000868.1"/>
</dbReference>
<dbReference type="SMR" id="Q9UXX7"/>
<dbReference type="STRING" id="272844.PAB1136"/>
<dbReference type="KEGG" id="pab:PAB1136"/>
<dbReference type="PATRIC" id="fig|272844.11.peg.1849"/>
<dbReference type="eggNOG" id="arCOG00307">
    <property type="taxonomic scope" value="Archaea"/>
</dbReference>
<dbReference type="HOGENOM" id="CLU_1302679_0_0_2"/>
<dbReference type="OrthoDB" id="85765at2157"/>
<dbReference type="PhylomeDB" id="Q9UXX7"/>
<dbReference type="Proteomes" id="UP000000810">
    <property type="component" value="Chromosome"/>
</dbReference>
<dbReference type="Proteomes" id="UP000009139">
    <property type="component" value="Chromosome"/>
</dbReference>
<dbReference type="GO" id="GO:0005737">
    <property type="term" value="C:cytoplasm"/>
    <property type="evidence" value="ECO:0007669"/>
    <property type="project" value="UniProtKB-SubCell"/>
</dbReference>
<dbReference type="GO" id="GO:0030677">
    <property type="term" value="C:ribonuclease P complex"/>
    <property type="evidence" value="ECO:0007669"/>
    <property type="project" value="UniProtKB-UniRule"/>
</dbReference>
<dbReference type="GO" id="GO:0004526">
    <property type="term" value="F:ribonuclease P activity"/>
    <property type="evidence" value="ECO:0007669"/>
    <property type="project" value="UniProtKB-UniRule"/>
</dbReference>
<dbReference type="GO" id="GO:0001682">
    <property type="term" value="P:tRNA 5'-leader removal"/>
    <property type="evidence" value="ECO:0007669"/>
    <property type="project" value="UniProtKB-UniRule"/>
</dbReference>
<dbReference type="Gene3D" id="3.20.20.140">
    <property type="entry name" value="Metal-dependent hydrolases"/>
    <property type="match status" value="1"/>
</dbReference>
<dbReference type="HAMAP" id="MF_00756">
    <property type="entry name" value="RNase_P_3"/>
    <property type="match status" value="1"/>
</dbReference>
<dbReference type="InterPro" id="IPR016195">
    <property type="entry name" value="Pol/histidinol_Pase-like"/>
</dbReference>
<dbReference type="InterPro" id="IPR023539">
    <property type="entry name" value="RNase_P_comp-3_arc"/>
</dbReference>
<dbReference type="InterPro" id="IPR002738">
    <property type="entry name" value="RNase_P_p30"/>
</dbReference>
<dbReference type="NCBIfam" id="NF003023">
    <property type="entry name" value="PRK03892.1"/>
    <property type="match status" value="1"/>
</dbReference>
<dbReference type="Pfam" id="PF01876">
    <property type="entry name" value="RNase_P_p30"/>
    <property type="match status" value="1"/>
</dbReference>
<dbReference type="SUPFAM" id="SSF89550">
    <property type="entry name" value="PHP domain-like"/>
    <property type="match status" value="1"/>
</dbReference>
<name>RNP3_PYRAB</name>
<evidence type="ECO:0000255" key="1">
    <source>
        <dbReference type="HAMAP-Rule" id="MF_00756"/>
    </source>
</evidence>
<comment type="function">
    <text evidence="1">Part of ribonuclease P, a protein complex that generates mature tRNA molecules by cleaving their 5'-ends.</text>
</comment>
<comment type="catalytic activity">
    <reaction evidence="1">
        <text>Endonucleolytic cleavage of RNA, removing 5'-extranucleotides from tRNA precursor.</text>
        <dbReference type="EC" id="3.1.26.5"/>
    </reaction>
</comment>
<comment type="subunit">
    <text evidence="1">Consists of a catalytic RNA component and at least 4-5 protein subunits.</text>
</comment>
<comment type="subcellular location">
    <subcellularLocation>
        <location evidence="1">Cytoplasm</location>
    </subcellularLocation>
</comment>
<comment type="similarity">
    <text evidence="1">Belongs to the eukaryotic/archaeal RNase P protein component 3 family.</text>
</comment>
<feature type="chain" id="PRO_0000140044" description="Ribonuclease P protein component 3">
    <location>
        <begin position="1"/>
        <end position="212"/>
    </location>
</feature>
<proteinExistence type="inferred from homology"/>
<organism>
    <name type="scientific">Pyrococcus abyssi (strain GE5 / Orsay)</name>
    <dbReference type="NCBI Taxonomy" id="272844"/>
    <lineage>
        <taxon>Archaea</taxon>
        <taxon>Methanobacteriati</taxon>
        <taxon>Methanobacteriota</taxon>
        <taxon>Thermococci</taxon>
        <taxon>Thermococcales</taxon>
        <taxon>Thermococcaceae</taxon>
        <taxon>Pyrococcus</taxon>
    </lineage>
</organism>
<sequence length="212" mass="24365">MAGGGGLKFVEMDVRNDDAYKLAKEWFDEVVFSVKFQDSIDKELLREAERNYGLVAILLVNPRLSIVKEAVQRFKQNYLIYVESSDLRTIRYSIERGVDAIISPWVGRKDPGIDHTLARMMAKKGVALGFSLRPLLEASPYDKANILKFMRKAWQLTNKYKVKRFITSSANEKWHIRWPRDLATLGIIIGMEVQQAKAALSTYPDIILKRLK</sequence>